<evidence type="ECO:0000250" key="1">
    <source>
        <dbReference type="UniProtKB" id="Q7TN58"/>
    </source>
</evidence>
<evidence type="ECO:0000255" key="2"/>
<evidence type="ECO:0000256" key="3">
    <source>
        <dbReference type="SAM" id="MobiDB-lite"/>
    </source>
</evidence>
<evidence type="ECO:0000269" key="4">
    <source>
    </source>
</evidence>
<evidence type="ECO:0000269" key="5">
    <source>
    </source>
</evidence>
<evidence type="ECO:0000269" key="6">
    <source>
    </source>
</evidence>
<evidence type="ECO:0000269" key="7">
    <source>
    </source>
</evidence>
<evidence type="ECO:0000269" key="8">
    <source>
    </source>
</evidence>
<evidence type="ECO:0000269" key="9">
    <source>
    </source>
</evidence>
<evidence type="ECO:0000269" key="10">
    <source>
    </source>
</evidence>
<evidence type="ECO:0000269" key="11">
    <source>
    </source>
</evidence>
<evidence type="ECO:0000269" key="12">
    <source ref="3"/>
</evidence>
<evidence type="ECO:0000303" key="13">
    <source>
    </source>
</evidence>
<evidence type="ECO:0000303" key="14">
    <source>
    </source>
</evidence>
<evidence type="ECO:0000303" key="15">
    <source>
    </source>
</evidence>
<evidence type="ECO:0000305" key="16"/>
<evidence type="ECO:0000305" key="17">
    <source>
    </source>
</evidence>
<evidence type="ECO:0000312" key="18">
    <source>
        <dbReference type="HGNC" id="HGNC:20474"/>
    </source>
</evidence>
<evidence type="ECO:0007744" key="19">
    <source>
    </source>
</evidence>
<accession>Q8IU68</accession>
<accession>Q2YDC0</accession>
<accession>Q8IWU7</accession>
<accession>Q8N358</accession>
<accession>Q8NF04</accession>
<dbReference type="EMBL" id="AY057380">
    <property type="protein sequence ID" value="AAL25837.1"/>
    <property type="molecule type" value="mRNA"/>
</dbReference>
<dbReference type="EMBL" id="AY099358">
    <property type="protein sequence ID" value="AAM44454.1"/>
    <property type="molecule type" value="mRNA"/>
</dbReference>
<dbReference type="EMBL" id="AY099359">
    <property type="protein sequence ID" value="AAM44455.1"/>
    <property type="molecule type" value="mRNA"/>
</dbReference>
<dbReference type="EMBL" id="AY236500">
    <property type="protein sequence ID" value="AAP69878.1"/>
    <property type="molecule type" value="mRNA"/>
</dbReference>
<dbReference type="EMBL" id="AK090478">
    <property type="protein sequence ID" value="BAC03459.1"/>
    <property type="status" value="ALT_INIT"/>
    <property type="molecule type" value="mRNA"/>
</dbReference>
<dbReference type="EMBL" id="AC021593">
    <property type="status" value="NOT_ANNOTATED_CDS"/>
    <property type="molecule type" value="Genomic_DNA"/>
</dbReference>
<dbReference type="EMBL" id="BC028076">
    <property type="status" value="NOT_ANNOTATED_CDS"/>
    <property type="molecule type" value="mRNA"/>
</dbReference>
<dbReference type="EMBL" id="BC110296">
    <property type="protein sequence ID" value="AAI10297.1"/>
    <property type="molecule type" value="mRNA"/>
</dbReference>
<dbReference type="CCDS" id="CCDS32749.1">
    <molecule id="Q8IU68-1"/>
</dbReference>
<dbReference type="RefSeq" id="NP_689681.2">
    <molecule id="Q8IU68-1"/>
    <property type="nucleotide sequence ID" value="NM_152468.4"/>
</dbReference>
<dbReference type="SMR" id="Q8IU68"/>
<dbReference type="BioGRID" id="127037">
    <property type="interactions" value="6"/>
</dbReference>
<dbReference type="FunCoup" id="Q8IU68">
    <property type="interactions" value="178"/>
</dbReference>
<dbReference type="IntAct" id="Q8IU68">
    <property type="interactions" value="1"/>
</dbReference>
<dbReference type="STRING" id="9606.ENSP00000325561"/>
<dbReference type="TCDB" id="1.A.17.4.11">
    <property type="family name" value="the calcium-dependent chloride channel (ca-clc) family"/>
</dbReference>
<dbReference type="GlyCosmos" id="Q8IU68">
    <property type="glycosylation" value="2 sites, No reported glycans"/>
</dbReference>
<dbReference type="GlyGen" id="Q8IU68">
    <property type="glycosylation" value="2 sites"/>
</dbReference>
<dbReference type="iPTMnet" id="Q8IU68"/>
<dbReference type="PhosphoSitePlus" id="Q8IU68"/>
<dbReference type="SwissPalm" id="Q8IU68"/>
<dbReference type="BioMuta" id="TMC8"/>
<dbReference type="DMDM" id="74714272"/>
<dbReference type="jPOST" id="Q8IU68"/>
<dbReference type="MassIVE" id="Q8IU68"/>
<dbReference type="PaxDb" id="9606-ENSP00000325561"/>
<dbReference type="PeptideAtlas" id="Q8IU68"/>
<dbReference type="ProteomicsDB" id="70513">
    <molecule id="Q8IU68-1"/>
</dbReference>
<dbReference type="ProteomicsDB" id="70514">
    <molecule id="Q8IU68-2"/>
</dbReference>
<dbReference type="Antibodypedia" id="32534">
    <property type="antibodies" value="193 antibodies from 28 providers"/>
</dbReference>
<dbReference type="DNASU" id="147138"/>
<dbReference type="Ensembl" id="ENST00000318430.10">
    <molecule id="Q8IU68-1"/>
    <property type="protein sequence ID" value="ENSP00000325561.4"/>
    <property type="gene ID" value="ENSG00000167895.16"/>
</dbReference>
<dbReference type="Ensembl" id="ENST00000589691.1">
    <molecule id="Q8IU68-2"/>
    <property type="protein sequence ID" value="ENSP00000467482.1"/>
    <property type="gene ID" value="ENSG00000167895.16"/>
</dbReference>
<dbReference type="GeneID" id="147138"/>
<dbReference type="KEGG" id="hsa:147138"/>
<dbReference type="MANE-Select" id="ENST00000318430.10">
    <property type="protein sequence ID" value="ENSP00000325561.4"/>
    <property type="RefSeq nucleotide sequence ID" value="NM_152468.5"/>
    <property type="RefSeq protein sequence ID" value="NP_689681.2"/>
</dbReference>
<dbReference type="UCSC" id="uc002jup.3">
    <molecule id="Q8IU68-1"/>
    <property type="organism name" value="human"/>
</dbReference>
<dbReference type="AGR" id="HGNC:20474"/>
<dbReference type="CTD" id="147138"/>
<dbReference type="DisGeNET" id="147138"/>
<dbReference type="GeneCards" id="TMC8"/>
<dbReference type="HGNC" id="HGNC:20474">
    <property type="gene designation" value="TMC8"/>
</dbReference>
<dbReference type="HPA" id="ENSG00000167895">
    <property type="expression patterns" value="Group enriched (bone marrow, intestine, lymphoid tissue)"/>
</dbReference>
<dbReference type="MalaCards" id="TMC8"/>
<dbReference type="MIM" id="605829">
    <property type="type" value="gene"/>
</dbReference>
<dbReference type="MIM" id="618231">
    <property type="type" value="phenotype"/>
</dbReference>
<dbReference type="neXtProt" id="NX_Q8IU68"/>
<dbReference type="OpenTargets" id="ENSG00000167895"/>
<dbReference type="Orphanet" id="302">
    <property type="disease" value="Inherited epidermodysplasia verruciformis"/>
</dbReference>
<dbReference type="PharmGKB" id="PA134892288"/>
<dbReference type="VEuPathDB" id="HostDB:ENSG00000167895"/>
<dbReference type="eggNOG" id="ENOG502RKT7">
    <property type="taxonomic scope" value="Eukaryota"/>
</dbReference>
<dbReference type="GeneTree" id="ENSGT01050000244894"/>
<dbReference type="HOGENOM" id="CLU_013958_3_1_1"/>
<dbReference type="InParanoid" id="Q8IU68"/>
<dbReference type="OMA" id="KKYTLMR"/>
<dbReference type="OrthoDB" id="1936208at2759"/>
<dbReference type="PAN-GO" id="Q8IU68">
    <property type="GO annotations" value="1 GO annotation based on evolutionary models"/>
</dbReference>
<dbReference type="PhylomeDB" id="Q8IU68"/>
<dbReference type="TreeFam" id="TF313462"/>
<dbReference type="PathwayCommons" id="Q8IU68"/>
<dbReference type="SignaLink" id="Q8IU68"/>
<dbReference type="BioGRID-ORCS" id="147138">
    <property type="hits" value="17 hits in 1153 CRISPR screens"/>
</dbReference>
<dbReference type="ChiTaRS" id="TMC8">
    <property type="organism name" value="human"/>
</dbReference>
<dbReference type="GeneWiki" id="TMC8"/>
<dbReference type="GenomeRNAi" id="147138"/>
<dbReference type="Pharos" id="Q8IU68">
    <property type="development level" value="Tbio"/>
</dbReference>
<dbReference type="PRO" id="PR:Q8IU68"/>
<dbReference type="Proteomes" id="UP000005640">
    <property type="component" value="Chromosome 17"/>
</dbReference>
<dbReference type="RNAct" id="Q8IU68">
    <property type="molecule type" value="protein"/>
</dbReference>
<dbReference type="Bgee" id="ENSG00000167895">
    <property type="expression patterns" value="Expressed in granulocyte and 149 other cell types or tissues"/>
</dbReference>
<dbReference type="ExpressionAtlas" id="Q8IU68">
    <property type="expression patterns" value="baseline and differential"/>
</dbReference>
<dbReference type="GO" id="GO:0005737">
    <property type="term" value="C:cytoplasm"/>
    <property type="evidence" value="ECO:0000314"/>
    <property type="project" value="UniProtKB"/>
</dbReference>
<dbReference type="GO" id="GO:0005783">
    <property type="term" value="C:endoplasmic reticulum"/>
    <property type="evidence" value="ECO:0000314"/>
    <property type="project" value="UniProtKB"/>
</dbReference>
<dbReference type="GO" id="GO:0005789">
    <property type="term" value="C:endoplasmic reticulum membrane"/>
    <property type="evidence" value="ECO:0007669"/>
    <property type="project" value="UniProtKB-SubCell"/>
</dbReference>
<dbReference type="GO" id="GO:0070062">
    <property type="term" value="C:extracellular exosome"/>
    <property type="evidence" value="ECO:0007005"/>
    <property type="project" value="UniProtKB"/>
</dbReference>
<dbReference type="GO" id="GO:0005615">
    <property type="term" value="C:extracellular space"/>
    <property type="evidence" value="ECO:0007005"/>
    <property type="project" value="UniProtKB"/>
</dbReference>
<dbReference type="GO" id="GO:0005794">
    <property type="term" value="C:Golgi apparatus"/>
    <property type="evidence" value="ECO:0000314"/>
    <property type="project" value="UniProtKB"/>
</dbReference>
<dbReference type="GO" id="GO:0000139">
    <property type="term" value="C:Golgi membrane"/>
    <property type="evidence" value="ECO:0007669"/>
    <property type="project" value="UniProtKB-SubCell"/>
</dbReference>
<dbReference type="GO" id="GO:0031965">
    <property type="term" value="C:nuclear membrane"/>
    <property type="evidence" value="ECO:0000314"/>
    <property type="project" value="UniProtKB"/>
</dbReference>
<dbReference type="GO" id="GO:0005886">
    <property type="term" value="C:plasma membrane"/>
    <property type="evidence" value="ECO:0007669"/>
    <property type="project" value="InterPro"/>
</dbReference>
<dbReference type="GO" id="GO:0008381">
    <property type="term" value="F:mechanosensitive monoatomic ion channel activity"/>
    <property type="evidence" value="ECO:0000318"/>
    <property type="project" value="GO_Central"/>
</dbReference>
<dbReference type="GO" id="GO:0140311">
    <property type="term" value="F:protein sequestering activity"/>
    <property type="evidence" value="ECO:0000314"/>
    <property type="project" value="UniProtKB"/>
</dbReference>
<dbReference type="GO" id="GO:0043120">
    <property type="term" value="F:tumor necrosis factor binding"/>
    <property type="evidence" value="ECO:0000353"/>
    <property type="project" value="UniProtKB"/>
</dbReference>
<dbReference type="GO" id="GO:0006882">
    <property type="term" value="P:intracellular zinc ion homeostasis"/>
    <property type="evidence" value="ECO:0000314"/>
    <property type="project" value="GO_Central"/>
</dbReference>
<dbReference type="GO" id="GO:0043124">
    <property type="term" value="P:negative regulation of canonical NF-kappaB signal transduction"/>
    <property type="evidence" value="ECO:0000315"/>
    <property type="project" value="UniProt"/>
</dbReference>
<dbReference type="GO" id="GO:0032091">
    <property type="term" value="P:negative regulation of protein binding"/>
    <property type="evidence" value="ECO:0000314"/>
    <property type="project" value="UniProtKB"/>
</dbReference>
<dbReference type="GO" id="GO:0031333">
    <property type="term" value="P:negative regulation of protein-containing complex assembly"/>
    <property type="evidence" value="ECO:0000314"/>
    <property type="project" value="UniProtKB"/>
</dbReference>
<dbReference type="GO" id="GO:0043065">
    <property type="term" value="P:positive regulation of apoptotic process"/>
    <property type="evidence" value="ECO:0000314"/>
    <property type="project" value="UniProtKB"/>
</dbReference>
<dbReference type="GO" id="GO:0050821">
    <property type="term" value="P:protein stabilization"/>
    <property type="evidence" value="ECO:0000315"/>
    <property type="project" value="UniProtKB"/>
</dbReference>
<dbReference type="GO" id="GO:1902041">
    <property type="term" value="P:regulation of extrinsic apoptotic signaling pathway via death domain receptors"/>
    <property type="evidence" value="ECO:0000314"/>
    <property type="project" value="UniProtKB"/>
</dbReference>
<dbReference type="GO" id="GO:0010803">
    <property type="term" value="P:regulation of tumor necrosis factor-mediated signaling pathway"/>
    <property type="evidence" value="ECO:0000315"/>
    <property type="project" value="UniProt"/>
</dbReference>
<dbReference type="InterPro" id="IPR038900">
    <property type="entry name" value="TMC"/>
</dbReference>
<dbReference type="InterPro" id="IPR012496">
    <property type="entry name" value="TMC_dom"/>
</dbReference>
<dbReference type="PANTHER" id="PTHR23302:SF39">
    <property type="entry name" value="TRANSMEMBRANE CHANNEL-LIKE PROTEIN 8"/>
    <property type="match status" value="1"/>
</dbReference>
<dbReference type="PANTHER" id="PTHR23302">
    <property type="entry name" value="TRANSMEMBRANE CHANNEL-RELATED"/>
    <property type="match status" value="1"/>
</dbReference>
<dbReference type="Pfam" id="PF07810">
    <property type="entry name" value="TMC"/>
    <property type="match status" value="1"/>
</dbReference>
<proteinExistence type="evidence at protein level"/>
<keyword id="KW-0025">Alternative splicing</keyword>
<keyword id="KW-0225">Disease variant</keyword>
<keyword id="KW-0256">Endoplasmic reticulum</keyword>
<keyword id="KW-0325">Glycoprotein</keyword>
<keyword id="KW-0333">Golgi apparatus</keyword>
<keyword id="KW-0472">Membrane</keyword>
<keyword id="KW-0539">Nucleus</keyword>
<keyword id="KW-0597">Phosphoprotein</keyword>
<keyword id="KW-1267">Proteomics identification</keyword>
<keyword id="KW-1185">Reference proteome</keyword>
<keyword id="KW-0812">Transmembrane</keyword>
<keyword id="KW-1133">Transmembrane helix</keyword>
<gene>
    <name evidence="18" type="primary">TMC8</name>
    <name evidence="15" type="synonym">EVER2</name>
    <name type="synonym">EVIN2</name>
</gene>
<feature type="chain" id="PRO_0000185386" description="Transmembrane channel-like protein 8">
    <location>
        <begin position="1"/>
        <end position="726"/>
    </location>
</feature>
<feature type="topological domain" description="Cytoplasmic" evidence="2">
    <location>
        <begin position="1"/>
        <end position="114"/>
    </location>
</feature>
<feature type="transmembrane region" description="Helical" evidence="2">
    <location>
        <begin position="115"/>
        <end position="135"/>
    </location>
</feature>
<feature type="topological domain" description="Lumenal" evidence="2">
    <location>
        <begin position="136"/>
        <end position="200"/>
    </location>
</feature>
<feature type="transmembrane region" description="Helical" evidence="2">
    <location>
        <begin position="201"/>
        <end position="221"/>
    </location>
</feature>
<feature type="topological domain" description="Cytoplasmic" evidence="2">
    <location>
        <begin position="222"/>
        <end position="299"/>
    </location>
</feature>
<feature type="transmembrane region" description="Helical" evidence="2">
    <location>
        <begin position="300"/>
        <end position="320"/>
    </location>
</feature>
<feature type="topological domain" description="Lumenal" evidence="2">
    <location>
        <begin position="321"/>
        <end position="338"/>
    </location>
</feature>
<feature type="transmembrane region" description="Helical" evidence="2">
    <location>
        <begin position="339"/>
        <end position="359"/>
    </location>
</feature>
<feature type="topological domain" description="Cytoplasmic" evidence="2">
    <location>
        <begin position="360"/>
        <end position="426"/>
    </location>
</feature>
<feature type="transmembrane region" description="Helical" evidence="2">
    <location>
        <begin position="427"/>
        <end position="447"/>
    </location>
</feature>
<feature type="topological domain" description="Lumenal" evidence="2">
    <location>
        <begin position="448"/>
        <end position="488"/>
    </location>
</feature>
<feature type="transmembrane region" description="Helical" evidence="2">
    <location>
        <begin position="489"/>
        <end position="509"/>
    </location>
</feature>
<feature type="topological domain" description="Cytoplasmic" evidence="2">
    <location>
        <begin position="510"/>
        <end position="531"/>
    </location>
</feature>
<feature type="transmembrane region" description="Helical" evidence="2">
    <location>
        <begin position="532"/>
        <end position="552"/>
    </location>
</feature>
<feature type="topological domain" description="Lumenal" evidence="2">
    <location>
        <begin position="553"/>
        <end position="594"/>
    </location>
</feature>
<feature type="transmembrane region" description="Helical" evidence="2">
    <location>
        <begin position="595"/>
        <end position="615"/>
    </location>
</feature>
<feature type="topological domain" description="Cytoplasmic" evidence="2">
    <location>
        <begin position="616"/>
        <end position="726"/>
    </location>
</feature>
<feature type="region of interest" description="TMC domain" evidence="17">
    <location>
        <begin position="362"/>
        <end position="530"/>
    </location>
</feature>
<feature type="region of interest" description="Disordered" evidence="3">
    <location>
        <begin position="651"/>
        <end position="726"/>
    </location>
</feature>
<feature type="compositionally biased region" description="Pro residues" evidence="3">
    <location>
        <begin position="652"/>
        <end position="662"/>
    </location>
</feature>
<feature type="modified residue" description="Phosphoserine" evidence="1">
    <location>
        <position position="6"/>
    </location>
</feature>
<feature type="modified residue" description="Phosphoserine" evidence="19">
    <location>
        <position position="658"/>
    </location>
</feature>
<feature type="modified residue" description="Phosphoserine" evidence="1">
    <location>
        <position position="673"/>
    </location>
</feature>
<feature type="glycosylation site" description="N-linked (GlcNAc...) asparagine" evidence="2">
    <location>
        <position position="148"/>
    </location>
</feature>
<feature type="glycosylation site" description="N-linked (GlcNAc...) asparagine" evidence="2">
    <location>
        <position position="567"/>
    </location>
</feature>
<feature type="splice variant" id="VSP_016448" description="In isoform 2." evidence="13">
    <location>
        <begin position="1"/>
        <end position="223"/>
    </location>
</feature>
<feature type="sequence variant" id="VAR_023964" description="Decreased interaction with TRADD; decreased sensitivity to TNF-induced cell apoptosis; dbSNP:rs7208422." evidence="7 9 12">
    <original>N</original>
    <variation>I</variation>
    <location>
        <position position="306"/>
    </location>
</feature>
<feature type="sequence variant" id="VAR_081777" description="In EV2." evidence="4">
    <location>
        <begin position="362"/>
        <end position="726"/>
    </location>
</feature>
<feature type="sequence variant" id="VAR_052337" description="In dbSNP:rs11651675.">
    <original>V</original>
    <variation>I</variation>
    <location>
        <position position="501"/>
    </location>
</feature>
<feature type="sequence conflict" description="In Ref. 3; BAC03459." evidence="16" ref="3">
    <original>R</original>
    <variation>W</variation>
    <location>
        <position position="5"/>
    </location>
</feature>
<name>TMC8_HUMAN</name>
<sequence length="726" mass="81641">MLLPRSVSSERAPGVPEPEELWEAEMERLRGSGTPVRGLPYAMMDKRLIWQLREPAGVQTLRWQRWQRRRQTVERRLREAAQRLARGLGLWEGALYEIGGLFGTGIRSYFTFLRFLLLLNLLSLLLTASFVLLPLVWLRPPDPGPTLNLTLQCPGSRQSPPGVLRFHNQLWHVLTGRAFTNTYLFYGAYRVGPESSSVYSIRLAYLLSPLACLLLCFCGTLRRMVKGLPQKTLLGQGYQAPLSAKVFSSWDFCIRVQEAATIKKHEISNEFKVELEEGRRFQLMQQQTRAQTACRLLSYLRVNVLNGLLVVGAISAIFWATKYSQDNKEESLFLLLQYLPPGVIALVNFLGPLLFTFLVQLENYPPNTEVNLTLIWCVVLKLASLGMFSVSLGQTILCIGRDKSSCESYGYNVCDYQCWENSVGEELYKLSIFNFLLTVAFAFLVTLPRRLLVDRFSGRFWAWLEREEFLVPKNVLDIVAGQTVTWMGLFYCPLLPLLNSVFLFLTFYIKKYTLLKNSRASSRPFRASSSTFFFQLVLLLGLLLAAVPLGYVVSSIHSSWDCGLFTNYSAPWQVVPELVALGLPPIGQRALHYLGSHAFSFPLLIMLSLVLTVCVSQTQANARAIHRLRKQLVWQVQEKWHLVEDLSRLLPEPGPSDSPGPKYPASQASRPQSFCPGCPCPGSPGHQAPRPGPSVVDAAGLRSPCPGQHGAPASARRFRFPSGAEL</sequence>
<protein>
    <recommendedName>
        <fullName evidence="14">Transmembrane channel-like protein 8</fullName>
    </recommendedName>
    <alternativeName>
        <fullName>Epidermodysplasia verruciformis protein 2</fullName>
    </alternativeName>
</protein>
<organism>
    <name type="scientific">Homo sapiens</name>
    <name type="common">Human</name>
    <dbReference type="NCBI Taxonomy" id="9606"/>
    <lineage>
        <taxon>Eukaryota</taxon>
        <taxon>Metazoa</taxon>
        <taxon>Chordata</taxon>
        <taxon>Craniata</taxon>
        <taxon>Vertebrata</taxon>
        <taxon>Euteleostomi</taxon>
        <taxon>Mammalia</taxon>
        <taxon>Eutheria</taxon>
        <taxon>Euarchontoglires</taxon>
        <taxon>Primates</taxon>
        <taxon>Haplorrhini</taxon>
        <taxon>Catarrhini</taxon>
        <taxon>Hominidae</taxon>
        <taxon>Homo</taxon>
    </lineage>
</organism>
<reference key="1">
    <citation type="journal article" date="2002" name="Nat. Genet.">
        <title>Mutations in two adjacent novel genes are associated with epidermodysplasia verruciformis.</title>
        <authorList>
            <person name="Ramoz N."/>
            <person name="Rueda L.-A."/>
            <person name="Bouadjar B."/>
            <person name="Montoya L.-S."/>
            <person name="Orth G."/>
            <person name="Favre M."/>
        </authorList>
    </citation>
    <scope>NUCLEOTIDE SEQUENCE [MRNA] (ISOFORMS 1 AND 2)</scope>
    <scope>SUBCELLULAR LOCATION</scope>
    <scope>INVOLVEMENT IN EV2</scope>
    <scope>VARIANT EV2 362-GLU--LEU-726 DEL</scope>
</reference>
<reference key="2">
    <citation type="journal article" date="2003" name="Genomics">
        <title>Characterization of the transmembrane channel-like (TMC) gene family: functional clues from hearing loss and epidermodysplasia verruciformis.</title>
        <authorList>
            <person name="Kurima K."/>
            <person name="Yang Y."/>
            <person name="Sorber K."/>
            <person name="Griffith A.J."/>
        </authorList>
    </citation>
    <scope>NUCLEOTIDE SEQUENCE [MRNA] (ISOFORM 1)</scope>
    <scope>TISSUE SPECIFICITY</scope>
</reference>
<reference key="3">
    <citation type="submission" date="2002-07" db="EMBL/GenBank/DDBJ databases">
        <title>The nucleotide sequence of a long cDNA clone isolated from human spleen.</title>
        <authorList>
            <person name="Jikuya H."/>
            <person name="Takano J."/>
            <person name="Kikuno R."/>
            <person name="Nagase T."/>
            <person name="Ohara O."/>
        </authorList>
    </citation>
    <scope>NUCLEOTIDE SEQUENCE [LARGE SCALE MRNA] (ISOFORM 1)</scope>
    <scope>VARIANT ILE-306</scope>
    <source>
        <tissue>Spleen</tissue>
    </source>
</reference>
<reference key="4">
    <citation type="journal article" date="2006" name="Nature">
        <title>DNA sequence of human chromosome 17 and analysis of rearrangement in the human lineage.</title>
        <authorList>
            <person name="Zody M.C."/>
            <person name="Garber M."/>
            <person name="Adams D.J."/>
            <person name="Sharpe T."/>
            <person name="Harrow J."/>
            <person name="Lupski J.R."/>
            <person name="Nicholson C."/>
            <person name="Searle S.M."/>
            <person name="Wilming L."/>
            <person name="Young S.K."/>
            <person name="Abouelleil A."/>
            <person name="Allen N.R."/>
            <person name="Bi W."/>
            <person name="Bloom T."/>
            <person name="Borowsky M.L."/>
            <person name="Bugalter B.E."/>
            <person name="Butler J."/>
            <person name="Chang J.L."/>
            <person name="Chen C.-K."/>
            <person name="Cook A."/>
            <person name="Corum B."/>
            <person name="Cuomo C.A."/>
            <person name="de Jong P.J."/>
            <person name="DeCaprio D."/>
            <person name="Dewar K."/>
            <person name="FitzGerald M."/>
            <person name="Gilbert J."/>
            <person name="Gibson R."/>
            <person name="Gnerre S."/>
            <person name="Goldstein S."/>
            <person name="Grafham D.V."/>
            <person name="Grocock R."/>
            <person name="Hafez N."/>
            <person name="Hagopian D.S."/>
            <person name="Hart E."/>
            <person name="Norman C.H."/>
            <person name="Humphray S."/>
            <person name="Jaffe D.B."/>
            <person name="Jones M."/>
            <person name="Kamal M."/>
            <person name="Khodiyar V.K."/>
            <person name="LaButti K."/>
            <person name="Laird G."/>
            <person name="Lehoczky J."/>
            <person name="Liu X."/>
            <person name="Lokyitsang T."/>
            <person name="Loveland J."/>
            <person name="Lui A."/>
            <person name="Macdonald P."/>
            <person name="Major J.E."/>
            <person name="Matthews L."/>
            <person name="Mauceli E."/>
            <person name="McCarroll S.A."/>
            <person name="Mihalev A.H."/>
            <person name="Mudge J."/>
            <person name="Nguyen C."/>
            <person name="Nicol R."/>
            <person name="O'Leary S.B."/>
            <person name="Osoegawa K."/>
            <person name="Schwartz D.C."/>
            <person name="Shaw-Smith C."/>
            <person name="Stankiewicz P."/>
            <person name="Steward C."/>
            <person name="Swarbreck D."/>
            <person name="Venkataraman V."/>
            <person name="Whittaker C.A."/>
            <person name="Yang X."/>
            <person name="Zimmer A.R."/>
            <person name="Bradley A."/>
            <person name="Hubbard T."/>
            <person name="Birren B.W."/>
            <person name="Rogers J."/>
            <person name="Lander E.S."/>
            <person name="Nusbaum C."/>
        </authorList>
    </citation>
    <scope>NUCLEOTIDE SEQUENCE [LARGE SCALE GENOMIC DNA]</scope>
</reference>
<reference key="5">
    <citation type="journal article" date="2004" name="Genome Res.">
        <title>The status, quality, and expansion of the NIH full-length cDNA project: the Mammalian Gene Collection (MGC).</title>
        <authorList>
            <consortium name="The MGC Project Team"/>
        </authorList>
    </citation>
    <scope>NUCLEOTIDE SEQUENCE [LARGE SCALE MRNA] (ISOFORM 1)</scope>
    <source>
        <tissue>Blood</tissue>
    </source>
</reference>
<reference key="6">
    <citation type="journal article" date="2008" name="J. Exp. Med.">
        <title>Regulation of cellular zinc balance as a potential mechanism of EVER-mediated protection against pathogenesis by cutaneous oncogenic human papillomaviruses.</title>
        <authorList>
            <person name="Lazarczyk M."/>
            <person name="Pons C."/>
            <person name="Mendoza J.A."/>
            <person name="Cassonnet P."/>
            <person name="Jacob Y."/>
            <person name="Favre M."/>
        </authorList>
    </citation>
    <scope>FUNCTION</scope>
    <scope>INTERACTION WITH TMC6 AND SLC30A1</scope>
    <scope>INTERACTION WITH HPV (MICROBIAL INFECTION)</scope>
    <scope>DOMAIN</scope>
    <scope>SUBCELLULAR LOCATION</scope>
</reference>
<reference key="7">
    <citation type="journal article" date="2013" name="Cell Death Dis.">
        <title>EVER2 protein binds TRADD to promote TNF-alpha-induced apoptosis.</title>
        <authorList>
            <person name="Gaud G."/>
            <person name="Guillemot D."/>
            <person name="Jacob Y."/>
            <person name="Favre M."/>
            <person name="Vuillier F."/>
        </authorList>
    </citation>
    <scope>FUNCTION</scope>
    <scope>INTERACTION WITH TRADD</scope>
    <scope>CHARACTERIZATION OF VARIANT ILE-306</scope>
</reference>
<reference key="8">
    <citation type="journal article" date="2013" name="J. Proteome Res.">
        <title>Toward a comprehensive characterization of a human cancer cell phosphoproteome.</title>
        <authorList>
            <person name="Zhou H."/>
            <person name="Di Palma S."/>
            <person name="Preisinger C."/>
            <person name="Peng M."/>
            <person name="Polat A.N."/>
            <person name="Heck A.J."/>
            <person name="Mohammed S."/>
        </authorList>
    </citation>
    <scope>PHOSPHORYLATION [LARGE SCALE ANALYSIS] AT SER-658</scope>
    <scope>IDENTIFICATION BY MASS SPECTROMETRY [LARGE SCALE ANALYSIS]</scope>
    <source>
        <tissue>Erythroleukemia</tissue>
    </source>
</reference>
<reference key="9">
    <citation type="journal article" date="2014" name="Cell. Signal.">
        <title>TMC8 (EVER2) attenuates intracellular signaling by Zn2+ and Ca2+ and suppresses activation of Cl- currents.</title>
        <authorList>
            <person name="Sirianant L."/>
            <person name="Ousingsawat J."/>
            <person name="Tian Y."/>
            <person name="Schreiber R."/>
            <person name="Kunzelmann K."/>
        </authorList>
    </citation>
    <scope>FUNCTION</scope>
    <scope>SUBCELLULAR LOCATION</scope>
</reference>
<reference key="10">
    <citation type="journal article" date="2014" name="J. Proteomics">
        <title>An enzyme assisted RP-RPLC approach for in-depth analysis of human liver phosphoproteome.</title>
        <authorList>
            <person name="Bian Y."/>
            <person name="Song C."/>
            <person name="Cheng K."/>
            <person name="Dong M."/>
            <person name="Wang F."/>
            <person name="Huang J."/>
            <person name="Sun D."/>
            <person name="Wang L."/>
            <person name="Ye M."/>
            <person name="Zou H."/>
        </authorList>
    </citation>
    <scope>IDENTIFICATION BY MASS SPECTROMETRY [LARGE SCALE ANALYSIS]</scope>
    <source>
        <tissue>Liver</tissue>
    </source>
</reference>
<reference key="11">
    <citation type="journal article" date="2017" name="J. Eur. Acad. Dermatol. Venereol.">
        <title>Novel TMC8 splice site mutation in epidermodysplasia verruciformis and review of HPV infections in patients with the disease.</title>
        <authorList>
            <person name="Imahorn E."/>
            <person name="Yueksel Z."/>
            <person name="Spoerri I."/>
            <person name="Guerel G."/>
            <person name="Imhof C."/>
            <person name="Saracoglu Z.N."/>
            <person name="Koku Aksu A.E."/>
            <person name="Rady P.L."/>
            <person name="Tyring S.K."/>
            <person name="Kempf W."/>
            <person name="Itin P.H."/>
            <person name="Burger B."/>
        </authorList>
    </citation>
    <scope>INVOLVEMENT IN EV2</scope>
    <scope>VARIANT ILE-306</scope>
</reference>
<reference key="12">
    <citation type="journal article" date="2018" name="J. Exp. Med.">
        <title>The human CIB1-EVER1-EVER2 complex governs keratinocyte-intrinsic immunity to beta-papillomaviruses.</title>
        <authorList>
            <person name="de Jong S.J."/>
            <person name="Crequer A."/>
            <person name="Matos I."/>
            <person name="Hum D."/>
            <person name="Gunasekharan V."/>
            <person name="Lorenzo L."/>
            <person name="Jabot-Hanin F."/>
            <person name="Imahorn E."/>
            <person name="Arias A.A."/>
            <person name="Vahidnezhad H."/>
            <person name="Youssefian L."/>
            <person name="Markle J.G."/>
            <person name="Patin E."/>
            <person name="D'Amico A."/>
            <person name="Wang C.Q.F."/>
            <person name="Full F."/>
            <person name="Ensser A."/>
            <person name="Leisner T.M."/>
            <person name="Parise L.V."/>
            <person name="Bouaziz M."/>
            <person name="Maya N.P."/>
            <person name="Cadena X.R."/>
            <person name="Saka B."/>
            <person name="Saeidian A.H."/>
            <person name="Aghazadeh N."/>
            <person name="Zeinali S."/>
            <person name="Itin P."/>
            <person name="Krueger J.G."/>
            <person name="Laimins L."/>
            <person name="Abel L."/>
            <person name="Fuchs E."/>
            <person name="Uitto J."/>
            <person name="Franco J.L."/>
            <person name="Burger B."/>
            <person name="Orth G."/>
            <person name="Jouanguy E."/>
            <person name="Casanova J.L."/>
        </authorList>
    </citation>
    <scope>FUNCTION</scope>
    <scope>INTERACTION WITH CIB1 AND TMC6</scope>
    <scope>INTERACTION WITH HPV (MICROBIAL INFECTION)</scope>
</reference>
<reference key="13">
    <citation type="journal article" date="2020" name="J. Biol. Chem.">
        <title>Expression of a TMC6-TMC8-CIB1 heterotrimeric complex in lymphocytes is regulated by each of the components.</title>
        <authorList>
            <person name="Wu C.J."/>
            <person name="Li X."/>
            <person name="Sommers C.L."/>
            <person name="Kurima K."/>
            <person name="Huh S."/>
            <person name="Bugos G."/>
            <person name="Dong L."/>
            <person name="Li W."/>
            <person name="Griffith A.J."/>
            <person name="Samelson L.E."/>
        </authorList>
    </citation>
    <scope>FUNCTION</scope>
    <scope>INTERACTION WITH TMC6 AMD CIB1</scope>
</reference>
<comment type="function">
    <text evidence="6 7 8 10 11">Acts as a regulatory protein involved in the regulation of numerous cellular processes (PubMed:18158319, PubMed:23429285, PubMed:30068544, PubMed:32917726). Together with its homolog TMC6/EVER1, forms a complex with calcium-binding protein CIB1 in lymphocytes and keratynocytes where TMC6 and TMC8 stabilize CIB1 levels and reciprocally (PubMed:30068544, PubMed:32917726). Together with TMC6, also forms a complex with and activates zinc transporter ZNT1 at the ER membrane of keratynocytes, thereby facilitating zinc uptake into the ER (PubMed:18158319). Also inhibits receptor-mediated calcium release from ER stores and calcium activated and volume regulated chloride channels (PubMed:25220380). Down-regulates the activity of transcription factors induced by zinc and cytokines (PubMed:18158319). Also sequesters TRADD which impairs the recruitment of TRAF2 and RIPK1 in the pro-survival complex I and promotes proapoptotic complex II formation, and may therefore be involved in TNF-induced cell death/survival decisions (PubMed:23429285).</text>
</comment>
<comment type="subunit">
    <text evidence="6 7 10 11">Interacts with TMC6 (PubMed:32917726). Interacts and forms a complex with TMC6 and CIB1; the interaction stabilizes each component of the complex (PubMed:30068544, PubMed:32917726). Interacts and forms a complex with TMC6 and SLC30A1/ZNT1; the interaction regulates zinc transport into the ER (PubMed:18158319). Interacts with TRADD; the interaction competes with TRADD/RIPK1/TRAF2/cIAPs complex I formation and facilites complex II formation (PubMed:23429285).</text>
</comment>
<comment type="subunit">
    <text evidence="10">(Microbial infection) Interacts with human papillomavirus 16/HPV16 protein E5; the interaction alleviates TMC8-mediated transcription factors inhibition.</text>
</comment>
<comment type="subcellular location">
    <subcellularLocation>
        <location evidence="4 6 8">Endoplasmic reticulum membrane</location>
        <topology evidence="2">Multi-pass membrane protein</topology>
    </subcellularLocation>
    <subcellularLocation>
        <location evidence="6">Golgi apparatus membrane</location>
        <topology evidence="2">Multi-pass membrane protein</topology>
    </subcellularLocation>
    <subcellularLocation>
        <location evidence="6">Nucleus membrane</location>
        <topology evidence="2">Multi-pass membrane protein</topology>
    </subcellularLocation>
    <text evidence="6">Localizes to the ER, Golgi and nucleus membranes in keratinocytes.</text>
</comment>
<comment type="alternative products">
    <event type="alternative splicing"/>
    <isoform>
        <id>Q8IU68-1</id>
        <name>1</name>
        <name>Large EVER2</name>
        <sequence type="displayed"/>
    </isoform>
    <isoform>
        <id>Q8IU68-2</id>
        <name>2</name>
        <name>Small EVER2</name>
        <sequence type="described" ref="VSP_016448"/>
    </isoform>
</comment>
<comment type="tissue specificity">
    <text evidence="5">Expressed in placenta, prostate and testis.</text>
</comment>
<comment type="domain">
    <text evidence="6">The TMC domain mediates the interaction with SLC30A1/ZNT1.</text>
</comment>
<comment type="disease" evidence="4 9">
    <disease id="DI-05436">
        <name>Epidermodysplasia verruciformis 2</name>
        <acronym>EV2</acronym>
        <description>A form of epidermodysplasia verruciformis, a rare genodermatosis associated with a high risk of skin carcinoma that results from an abnormal susceptibility to infection by specific human papillomaviruses, including the oncogenic HPV5. Infection leads to the early development of disseminated flat wart-like and pityriasis versicolor-like skin lesions. Cutaneous Bowen's carcinomas in situ and invasive squamous cell carcinomas develop in about half of the patients, mainly on sun-exposed skin areas. EV2 inheritance is autosomal recessive.</description>
        <dbReference type="MIM" id="618231"/>
    </disease>
    <text>The disease is caused by variants affecting the gene represented in this entry.</text>
</comment>
<comment type="similarity">
    <text evidence="16">Belongs to the TMC family.</text>
</comment>
<comment type="sequence caution" evidence="16">
    <conflict type="erroneous initiation">
        <sequence resource="EMBL-CDS" id="BAC03459"/>
    </conflict>
    <text>Extended N-terminus.</text>
</comment>
<comment type="sequence caution" evidence="16">
    <conflict type="miscellaneous discrepancy">
        <sequence resource="EMBL" id="BC028076"/>
    </conflict>
    <text>Unlikely isoform. Aberrant splice sites.</text>
</comment>
<comment type="online information" name="TMC8base">
    <link uri="https://databases.lovd.nl/shared/genes/TMC8"/>
    <text>TMC8 mutation db</text>
</comment>